<feature type="chain" id="PRO_0000432270" description="Trans-3-hydroxy-L-proline dehydratase">
    <location>
        <begin position="1"/>
        <end position="342"/>
    </location>
</feature>
<feature type="active site" description="Proton acceptor" evidence="1">
    <location>
        <position position="90"/>
    </location>
</feature>
<feature type="binding site" evidence="1">
    <location>
        <begin position="91"/>
        <end position="92"/>
    </location>
    <ligand>
        <name>substrate</name>
    </ligand>
</feature>
<feature type="binding site" evidence="1">
    <location>
        <position position="251"/>
    </location>
    <ligand>
        <name>substrate</name>
    </ligand>
</feature>
<feature type="binding site" evidence="1">
    <location>
        <begin position="256"/>
        <end position="257"/>
    </location>
    <ligand>
        <name>substrate</name>
    </ligand>
</feature>
<gene>
    <name evidence="5" type="ordered locus">Pden_1184</name>
</gene>
<keyword id="KW-0456">Lyase</keyword>
<keyword id="KW-1185">Reference proteome</keyword>
<protein>
    <recommendedName>
        <fullName evidence="3">Trans-3-hydroxy-L-proline dehydratase</fullName>
        <shortName>T3LHyp dehydratase</shortName>
        <shortName evidence="3">t3HypD</shortName>
        <ecNumber evidence="2">4.2.1.77</ecNumber>
    </recommendedName>
    <alternativeName>
        <fullName>Trans-L-3-hydroxyproline dehydratase</fullName>
    </alternativeName>
</protein>
<reference key="1">
    <citation type="submission" date="2006-12" db="EMBL/GenBank/DDBJ databases">
        <title>Complete sequence of chromosome 1 of Paracoccus denitrificans PD1222.</title>
        <authorList>
            <person name="Copeland A."/>
            <person name="Lucas S."/>
            <person name="Lapidus A."/>
            <person name="Barry K."/>
            <person name="Detter J.C."/>
            <person name="Glavina del Rio T."/>
            <person name="Hammon N."/>
            <person name="Israni S."/>
            <person name="Dalin E."/>
            <person name="Tice H."/>
            <person name="Pitluck S."/>
            <person name="Munk A.C."/>
            <person name="Brettin T."/>
            <person name="Bruce D."/>
            <person name="Han C."/>
            <person name="Tapia R."/>
            <person name="Gilna P."/>
            <person name="Schmutz J."/>
            <person name="Larimer F."/>
            <person name="Land M."/>
            <person name="Hauser L."/>
            <person name="Kyrpides N."/>
            <person name="Lykidis A."/>
            <person name="Spiro S."/>
            <person name="Richardson D.J."/>
            <person name="Moir J.W.B."/>
            <person name="Ferguson S.J."/>
            <person name="van Spanning R.J.M."/>
            <person name="Richardson P."/>
        </authorList>
    </citation>
    <scope>NUCLEOTIDE SEQUENCE [LARGE SCALE GENOMIC DNA]</scope>
    <source>
        <strain>Pd 1222</strain>
    </source>
</reference>
<reference key="2">
    <citation type="journal article" date="2014" name="Elife">
        <title>Prediction and characterization of enzymatic activities guided by sequence similarity and genome neighborhood networks.</title>
        <authorList>
            <person name="Zhao S."/>
            <person name="Sakai A."/>
            <person name="Zhang X."/>
            <person name="Vetting M.W."/>
            <person name="Kumar R."/>
            <person name="Hillerich B."/>
            <person name="San Francisco B."/>
            <person name="Solbiati J."/>
            <person name="Steves A."/>
            <person name="Brown S."/>
            <person name="Akiva E."/>
            <person name="Barber A."/>
            <person name="Seidel R.D."/>
            <person name="Babbitt P.C."/>
            <person name="Almo S.C."/>
            <person name="Gerlt J.A."/>
            <person name="Jacobson M.P."/>
        </authorList>
    </citation>
    <scope>FUNCTION</scope>
    <scope>CATALYTIC ACTIVITY</scope>
    <source>
        <strain>Pd 1222</strain>
    </source>
</reference>
<name>T3HPD_PARDP</name>
<accession>A1B195</accession>
<organism>
    <name type="scientific">Paracoccus denitrificans (strain Pd 1222)</name>
    <dbReference type="NCBI Taxonomy" id="318586"/>
    <lineage>
        <taxon>Bacteria</taxon>
        <taxon>Pseudomonadati</taxon>
        <taxon>Pseudomonadota</taxon>
        <taxon>Alphaproteobacteria</taxon>
        <taxon>Rhodobacterales</taxon>
        <taxon>Paracoccaceae</taxon>
        <taxon>Paracoccus</taxon>
    </lineage>
</organism>
<proteinExistence type="evidence at protein level"/>
<comment type="function">
    <text evidence="2 4">Catalyzes the dehydration of trans-3-hydroxy-L-proline (t3LHyp) to Delta(1)-pyrroline-2-carboxylate (Pyr2C). Is likely involved in a degradation pathway that converts t3LHyp to L-proline, which would allow P.denitrificans to grow on t3LHyp as a sole carbon source. Displays neither proline racemase activity nor 4-hydroxyproline 2-epimerase activity.</text>
</comment>
<comment type="catalytic activity">
    <reaction evidence="2">
        <text>trans-3-hydroxy-L-proline = 1-pyrroline-2-carboxylate + H2O</text>
        <dbReference type="Rhea" id="RHEA:10320"/>
        <dbReference type="ChEBI" id="CHEBI:15377"/>
        <dbReference type="ChEBI" id="CHEBI:39785"/>
        <dbReference type="ChEBI" id="CHEBI:57938"/>
        <dbReference type="EC" id="4.2.1.77"/>
    </reaction>
</comment>
<comment type="similarity">
    <text evidence="4">Belongs to the proline racemase family.</text>
</comment>
<sequence>MRTSRVVHVVSCHAEGEVGDVIVGGVAPPPGETVWDQSRWIARDETLRNFVLNEPRGGVFRHVNLLVPPKDPRAQMGWIIMEPADTPPMSGSNAICVATVLLDTGIIPMQEPITRMVLEPPGGLIEVEAECRGGKAERIRVRNVPSFADRLDARIEVEGLGTITVDTAYGGDSFVLVDAASVGMRIAPDQARDLAEMGVRITRAANEQLGFRHPANDWSHISFCQFTDPLSERDGVLYGRNAVAIRPGKIDRSPTGTGCSARMAVLHARGRMKPGDRFVGRSIIDTEFHCSIADEVELNGKRAIRPIISGRAWVIGTKQLMVDPDDPFQNGYRLSDTWPMDL</sequence>
<evidence type="ECO:0000250" key="1">
    <source>
        <dbReference type="UniProtKB" id="B9K4G4"/>
    </source>
</evidence>
<evidence type="ECO:0000269" key="2">
    <source>
    </source>
</evidence>
<evidence type="ECO:0000303" key="3">
    <source>
    </source>
</evidence>
<evidence type="ECO:0000305" key="4"/>
<evidence type="ECO:0000312" key="5">
    <source>
        <dbReference type="EMBL" id="ABL69289.1"/>
    </source>
</evidence>
<dbReference type="EC" id="4.2.1.77" evidence="2"/>
<dbReference type="EMBL" id="CP000489">
    <property type="protein sequence ID" value="ABL69289.1"/>
    <property type="molecule type" value="Genomic_DNA"/>
</dbReference>
<dbReference type="RefSeq" id="WP_011747509.1">
    <property type="nucleotide sequence ID" value="NC_008686.1"/>
</dbReference>
<dbReference type="SMR" id="A1B195"/>
<dbReference type="STRING" id="318586.Pden_1184"/>
<dbReference type="EnsemblBacteria" id="ABL69289">
    <property type="protein sequence ID" value="ABL69289"/>
    <property type="gene ID" value="Pden_1184"/>
</dbReference>
<dbReference type="GeneID" id="93452400"/>
<dbReference type="KEGG" id="pde:Pden_1184"/>
<dbReference type="eggNOG" id="COG3938">
    <property type="taxonomic scope" value="Bacteria"/>
</dbReference>
<dbReference type="HOGENOM" id="CLU_036729_2_0_5"/>
<dbReference type="OrthoDB" id="181267at2"/>
<dbReference type="Proteomes" id="UP000000361">
    <property type="component" value="Chromosome 1"/>
</dbReference>
<dbReference type="GO" id="GO:0047580">
    <property type="term" value="F:4-hydroxyproline epimerase activity"/>
    <property type="evidence" value="ECO:0007669"/>
    <property type="project" value="TreeGrafter"/>
</dbReference>
<dbReference type="GO" id="GO:0050346">
    <property type="term" value="F:trans-L-3-hydroxyproline dehydratase activity"/>
    <property type="evidence" value="ECO:0007669"/>
    <property type="project" value="UniProtKB-EC"/>
</dbReference>
<dbReference type="FunFam" id="3.10.310.10:FF:000005">
    <property type="entry name" value="Proline racemase"/>
    <property type="match status" value="1"/>
</dbReference>
<dbReference type="FunFam" id="3.10.310.10:FF:000010">
    <property type="entry name" value="Proline racemase"/>
    <property type="match status" value="1"/>
</dbReference>
<dbReference type="Gene3D" id="3.10.310.10">
    <property type="entry name" value="Diaminopimelate Epimerase, Chain A, domain 1"/>
    <property type="match status" value="2"/>
</dbReference>
<dbReference type="InterPro" id="IPR008794">
    <property type="entry name" value="Pro_racemase_fam"/>
</dbReference>
<dbReference type="NCBIfam" id="NF047722">
    <property type="entry name" value="T3LHypDht"/>
    <property type="match status" value="1"/>
</dbReference>
<dbReference type="PANTHER" id="PTHR33442:SF5">
    <property type="entry name" value="BIFUNCTIONAL TRANS-3-HYDROXY-L-PROLINE DEHYDRATASE_2-EPIMERASE"/>
    <property type="match status" value="1"/>
</dbReference>
<dbReference type="PANTHER" id="PTHR33442">
    <property type="entry name" value="TRANS-3-HYDROXY-L-PROLINE DEHYDRATASE"/>
    <property type="match status" value="1"/>
</dbReference>
<dbReference type="Pfam" id="PF05544">
    <property type="entry name" value="Pro_racemase"/>
    <property type="match status" value="1"/>
</dbReference>
<dbReference type="PIRSF" id="PIRSF029792">
    <property type="entry name" value="Pro_racemase"/>
    <property type="match status" value="1"/>
</dbReference>
<dbReference type="SFLD" id="SFLDS00028">
    <property type="entry name" value="Proline_Racemase"/>
    <property type="match status" value="1"/>
</dbReference>
<dbReference type="SUPFAM" id="SSF54506">
    <property type="entry name" value="Diaminopimelate epimerase-like"/>
    <property type="match status" value="1"/>
</dbReference>